<keyword id="KW-0020">Allergen</keyword>
<keyword id="KW-0903">Direct protein sequencing</keyword>
<keyword id="KW-0964">Secreted</keyword>
<comment type="subcellular location">
    <subcellularLocation>
        <location evidence="3">Secreted</location>
    </subcellularLocation>
</comment>
<comment type="tissue specificity">
    <text evidence="3">Expressed by the venom gland.</text>
</comment>
<comment type="allergen">
    <text evidence="1">Causes an allergic reaction in human.</text>
</comment>
<comment type="similarity">
    <text evidence="2">Belongs to the CRISP family.</text>
</comment>
<evidence type="ECO:0000250" key="1">
    <source>
        <dbReference type="UniProtKB" id="P35779"/>
    </source>
</evidence>
<evidence type="ECO:0000255" key="2"/>
<evidence type="ECO:0000269" key="3">
    <source ref="1"/>
</evidence>
<evidence type="ECO:0000303" key="4">
    <source ref="1"/>
</evidence>
<evidence type="ECO:0000305" key="5"/>
<reference evidence="5" key="1">
    <citation type="submission" date="2008-05" db="UniProtKB">
        <title>Allergenic protein in venom of spider Phoneutria keyserlingi.</title>
        <authorList>
            <person name="Richardson M."/>
            <person name="Souza I.A."/>
            <person name="Rezende F.F."/>
            <person name="Borges M.H."/>
            <person name="Sousa A."/>
            <person name="Cordeiro M.N."/>
        </authorList>
    </citation>
    <scope>PROTEIN SEQUENCE</scope>
    <scope>SUBCELLULAR LOCATION</scope>
    <scope>TISSUE SPECIFICITY</scope>
    <source>
        <tissue evidence="3">Venom</tissue>
    </source>
</reference>
<protein>
    <recommendedName>
        <fullName>CRISP-1</fullName>
    </recommendedName>
    <alternativeName>
        <fullName>Cysteine-rich venom protein</fullName>
        <shortName>CRVP</shortName>
    </alternativeName>
    <alternativeName>
        <fullName>Venom allergen</fullName>
    </alternativeName>
</protein>
<name>VA_PHOKE</name>
<organism>
    <name type="scientific">Phoneutria keyserlingi</name>
    <name type="common">Brazilian wandering spider</name>
    <name type="synonym">Ctenus keyserlingii</name>
    <dbReference type="NCBI Taxonomy" id="272754"/>
    <lineage>
        <taxon>Eukaryota</taxon>
        <taxon>Metazoa</taxon>
        <taxon>Ecdysozoa</taxon>
        <taxon>Arthropoda</taxon>
        <taxon>Chelicerata</taxon>
        <taxon>Arachnida</taxon>
        <taxon>Araneae</taxon>
        <taxon>Araneomorphae</taxon>
        <taxon>Entelegynae</taxon>
        <taxon>Lycosoidea</taxon>
        <taxon>Ctenidae</taxon>
        <taxon>Phoneutria</taxon>
    </lineage>
</organism>
<sequence length="147" mass="16592">GLCPDKYKRYSLQHSFCLPTCVSCAFYSKDVRYWLKNYILYQHNNLRNVVASGRSYGVDHVPRICLTVVTRIGCGYLFRKYTNVICNYGPRGNVEGEEIYKGGDICSACPANTCCGDGCKYHGLCKFGEPNLPEIFYCGFNGESDCR</sequence>
<proteinExistence type="evidence at protein level"/>
<feature type="chain" id="PRO_0000343534" description="CRISP-1">
    <location>
        <begin position="1"/>
        <end position="147" status="greater than"/>
    </location>
</feature>
<feature type="non-consecutive residues" evidence="4">
    <location>
        <begin position="63"/>
        <end position="64"/>
    </location>
</feature>
<feature type="non-consecutive residues" evidence="4">
    <location>
        <begin position="71"/>
        <end position="72"/>
    </location>
</feature>
<feature type="non-consecutive residues" evidence="4">
    <location>
        <begin position="79"/>
        <end position="80"/>
    </location>
</feature>
<feature type="non-consecutive residues" evidence="4">
    <location>
        <begin position="120"/>
        <end position="121"/>
    </location>
</feature>
<feature type="non-consecutive residues" evidence="4">
    <location>
        <begin position="133"/>
        <end position="134"/>
    </location>
</feature>
<feature type="non-terminal residue" evidence="4">
    <location>
        <position position="147"/>
    </location>
</feature>
<accession>P85860</accession>
<dbReference type="ArachnoServer" id="AS000013">
    <property type="toxin name" value="CRISP-1-Phoneutria keyserlingi"/>
</dbReference>
<dbReference type="GO" id="GO:0005576">
    <property type="term" value="C:extracellular region"/>
    <property type="evidence" value="ECO:0007669"/>
    <property type="project" value="UniProtKB-SubCell"/>
</dbReference>
<dbReference type="Gene3D" id="3.40.33.10">
    <property type="entry name" value="CAP"/>
    <property type="match status" value="1"/>
</dbReference>
<dbReference type="InterPro" id="IPR035940">
    <property type="entry name" value="CAP_sf"/>
</dbReference>
<dbReference type="SUPFAM" id="SSF55797">
    <property type="entry name" value="PR-1-like"/>
    <property type="match status" value="1"/>
</dbReference>